<comment type="catalytic activity">
    <reaction>
        <text>1-(5-phospho-beta-D-ribosyl)-5-[(5-phospho-beta-D-ribosylamino)methylideneamino]imidazole-4-carboxamide = 5-[(5-phospho-1-deoxy-D-ribulos-1-ylimino)methylamino]-1-(5-phospho-beta-D-ribosyl)imidazole-4-carboxamide</text>
        <dbReference type="Rhea" id="RHEA:15469"/>
        <dbReference type="ChEBI" id="CHEBI:58435"/>
        <dbReference type="ChEBI" id="CHEBI:58525"/>
        <dbReference type="EC" id="5.3.1.16"/>
    </reaction>
</comment>
<comment type="pathway">
    <text>Amino-acid biosynthesis; L-histidine biosynthesis; L-histidine from 5-phospho-alpha-D-ribose 1-diphosphate: step 4/9.</text>
</comment>
<comment type="subcellular location">
    <subcellularLocation>
        <location evidence="1">Cytoplasm</location>
    </subcellularLocation>
</comment>
<comment type="similarity">
    <text evidence="2">Belongs to the HisA/HisF family.</text>
</comment>
<comment type="sequence caution" evidence="2">
    <conflict type="erroneous initiation">
        <sequence resource="EMBL-CDS" id="AAB85341"/>
    </conflict>
</comment>
<accession>O26931</accession>
<dbReference type="EC" id="5.3.1.16"/>
<dbReference type="EMBL" id="AE000666">
    <property type="protein sequence ID" value="AAB85341.1"/>
    <property type="status" value="ALT_INIT"/>
    <property type="molecule type" value="Genomic_DNA"/>
</dbReference>
<dbReference type="PIR" id="E69212">
    <property type="entry name" value="E69212"/>
</dbReference>
<dbReference type="SMR" id="O26931"/>
<dbReference type="FunCoup" id="O26931">
    <property type="interactions" value="121"/>
</dbReference>
<dbReference type="STRING" id="187420.MTH_843"/>
<dbReference type="PaxDb" id="187420-MTH_843"/>
<dbReference type="EnsemblBacteria" id="AAB85341">
    <property type="protein sequence ID" value="AAB85341"/>
    <property type="gene ID" value="MTH_843"/>
</dbReference>
<dbReference type="KEGG" id="mth:MTH_843"/>
<dbReference type="PATRIC" id="fig|187420.15.peg.826"/>
<dbReference type="HOGENOM" id="CLU_048577_1_1_2"/>
<dbReference type="InParanoid" id="O26931"/>
<dbReference type="UniPathway" id="UPA00031">
    <property type="reaction ID" value="UER00009"/>
</dbReference>
<dbReference type="Proteomes" id="UP000005223">
    <property type="component" value="Chromosome"/>
</dbReference>
<dbReference type="GO" id="GO:0005737">
    <property type="term" value="C:cytoplasm"/>
    <property type="evidence" value="ECO:0007669"/>
    <property type="project" value="UniProtKB-SubCell"/>
</dbReference>
<dbReference type="GO" id="GO:0003949">
    <property type="term" value="F:1-(5-phosphoribosyl)-5-[(5-phosphoribosylamino)methylideneamino]imidazole-4-carboxamide isomerase activity"/>
    <property type="evidence" value="ECO:0007669"/>
    <property type="project" value="UniProtKB-UniRule"/>
</dbReference>
<dbReference type="GO" id="GO:0000105">
    <property type="term" value="P:L-histidine biosynthetic process"/>
    <property type="evidence" value="ECO:0007669"/>
    <property type="project" value="UniProtKB-UniRule"/>
</dbReference>
<dbReference type="GO" id="GO:0000162">
    <property type="term" value="P:L-tryptophan biosynthetic process"/>
    <property type="evidence" value="ECO:0007669"/>
    <property type="project" value="TreeGrafter"/>
</dbReference>
<dbReference type="CDD" id="cd04732">
    <property type="entry name" value="HisA"/>
    <property type="match status" value="1"/>
</dbReference>
<dbReference type="FunFam" id="3.20.20.70:FF:000009">
    <property type="entry name" value="1-(5-phosphoribosyl)-5-[(5-phosphoribosylamino)methylideneamino] imidazole-4-carboxamide isomerase"/>
    <property type="match status" value="1"/>
</dbReference>
<dbReference type="Gene3D" id="3.20.20.70">
    <property type="entry name" value="Aldolase class I"/>
    <property type="match status" value="1"/>
</dbReference>
<dbReference type="HAMAP" id="MF_01014">
    <property type="entry name" value="HisA"/>
    <property type="match status" value="1"/>
</dbReference>
<dbReference type="InterPro" id="IPR013785">
    <property type="entry name" value="Aldolase_TIM"/>
</dbReference>
<dbReference type="InterPro" id="IPR006062">
    <property type="entry name" value="His_biosynth"/>
</dbReference>
<dbReference type="InterPro" id="IPR006063">
    <property type="entry name" value="HisA_bact_arch"/>
</dbReference>
<dbReference type="InterPro" id="IPR044524">
    <property type="entry name" value="Isoase_HisA-like"/>
</dbReference>
<dbReference type="InterPro" id="IPR023016">
    <property type="entry name" value="Isoase_HisA-like_bact"/>
</dbReference>
<dbReference type="InterPro" id="IPR011060">
    <property type="entry name" value="RibuloseP-bd_barrel"/>
</dbReference>
<dbReference type="NCBIfam" id="TIGR00007">
    <property type="entry name" value="1-(5-phosphoribosyl)-5-[(5-phosphoribosylamino)methylideneamino]imidazole-4-carboxamide isomerase"/>
    <property type="match status" value="1"/>
</dbReference>
<dbReference type="NCBIfam" id="NF010112">
    <property type="entry name" value="PRK13585.1"/>
    <property type="match status" value="1"/>
</dbReference>
<dbReference type="PANTHER" id="PTHR43090">
    <property type="entry name" value="1-(5-PHOSPHORIBOSYL)-5-[(5-PHOSPHORIBOSYLAMINO)METHYLIDENEAMINO] IMIDAZOLE-4-CARBOXAMIDE ISOMERASE"/>
    <property type="match status" value="1"/>
</dbReference>
<dbReference type="PANTHER" id="PTHR43090:SF7">
    <property type="entry name" value="1-(5-PHOSPHORIBOSYL)-5-[(5-PHOSPHORIBOSYLAMINO)METHYLIDENEAMINO] IMIDAZOLE-4-CARBOXAMIDE ISOMERASE"/>
    <property type="match status" value="1"/>
</dbReference>
<dbReference type="Pfam" id="PF00977">
    <property type="entry name" value="His_biosynth"/>
    <property type="match status" value="1"/>
</dbReference>
<dbReference type="SUPFAM" id="SSF51366">
    <property type="entry name" value="Ribulose-phoshate binding barrel"/>
    <property type="match status" value="1"/>
</dbReference>
<evidence type="ECO:0000250" key="1"/>
<evidence type="ECO:0000305" key="2"/>
<sequence>MLIIPAVDIKDGKCVQLVQGKPGTEQVVLDDPAGVAGRWESLGAETIHVVDLDGALGLEKNTGILKEITERVSVPLQIGGGIRSREYAGKLLDMGFERVILGTMAIENPAIVEELAGEYGSERIMVSLDSRDSRVVIRGWTEKVPFTAEEMARKFQERGAGSILFTNVDFEGLLSGFDLKPVSELVEAVEIPVIYSGGVSSLNDLRMLQGTGVMGVVIGSAIYRGLIDLTEALKYQDLK</sequence>
<feature type="chain" id="PRO_0000142096" description="1-(5-phosphoribosyl)-5-[(5-phosphoribosylamino)methylideneamino] imidazole-4-carboxamide isomerase">
    <location>
        <begin position="1"/>
        <end position="239"/>
    </location>
</feature>
<feature type="active site" description="Proton acceptor" evidence="1">
    <location>
        <position position="8"/>
    </location>
</feature>
<feature type="active site" description="Proton donor" evidence="1">
    <location>
        <position position="129"/>
    </location>
</feature>
<reference key="1">
    <citation type="journal article" date="1997" name="J. Bacteriol.">
        <title>Complete genome sequence of Methanobacterium thermoautotrophicum deltaH: functional analysis and comparative genomics.</title>
        <authorList>
            <person name="Smith D.R."/>
            <person name="Doucette-Stamm L.A."/>
            <person name="Deloughery C."/>
            <person name="Lee H.-M."/>
            <person name="Dubois J."/>
            <person name="Aldredge T."/>
            <person name="Bashirzadeh R."/>
            <person name="Blakely D."/>
            <person name="Cook R."/>
            <person name="Gilbert K."/>
            <person name="Harrison D."/>
            <person name="Hoang L."/>
            <person name="Keagle P."/>
            <person name="Lumm W."/>
            <person name="Pothier B."/>
            <person name="Qiu D."/>
            <person name="Spadafora R."/>
            <person name="Vicare R."/>
            <person name="Wang Y."/>
            <person name="Wierzbowski J."/>
            <person name="Gibson R."/>
            <person name="Jiwani N."/>
            <person name="Caruso A."/>
            <person name="Bush D."/>
            <person name="Safer H."/>
            <person name="Patwell D."/>
            <person name="Prabhakar S."/>
            <person name="McDougall S."/>
            <person name="Shimer G."/>
            <person name="Goyal A."/>
            <person name="Pietrovski S."/>
            <person name="Church G.M."/>
            <person name="Daniels C.J."/>
            <person name="Mao J.-I."/>
            <person name="Rice P."/>
            <person name="Noelling J."/>
            <person name="Reeve J.N."/>
        </authorList>
    </citation>
    <scope>NUCLEOTIDE SEQUENCE [LARGE SCALE GENOMIC DNA]</scope>
    <source>
        <strain>ATCC 29096 / DSM 1053 / JCM 10044 / NBRC 100330 / Delta H</strain>
    </source>
</reference>
<name>HIS4_METTH</name>
<protein>
    <recommendedName>
        <fullName>1-(5-phosphoribosyl)-5-[(5-phosphoribosylamino)methylideneamino] imidazole-4-carboxamide isomerase</fullName>
        <ecNumber>5.3.1.16</ecNumber>
    </recommendedName>
    <alternativeName>
        <fullName>Phosphoribosylformimino-5-aminoimidazole carboxamide ribotide isomerase</fullName>
    </alternativeName>
</protein>
<proteinExistence type="inferred from homology"/>
<gene>
    <name type="primary">hisA</name>
    <name type="ordered locus">MTH_843</name>
</gene>
<keyword id="KW-0028">Amino-acid biosynthesis</keyword>
<keyword id="KW-0963">Cytoplasm</keyword>
<keyword id="KW-0368">Histidine biosynthesis</keyword>
<keyword id="KW-0413">Isomerase</keyword>
<keyword id="KW-1185">Reference proteome</keyword>
<organism>
    <name type="scientific">Methanothermobacter thermautotrophicus (strain ATCC 29096 / DSM 1053 / JCM 10044 / NBRC 100330 / Delta H)</name>
    <name type="common">Methanobacterium thermoautotrophicum</name>
    <dbReference type="NCBI Taxonomy" id="187420"/>
    <lineage>
        <taxon>Archaea</taxon>
        <taxon>Methanobacteriati</taxon>
        <taxon>Methanobacteriota</taxon>
        <taxon>Methanomada group</taxon>
        <taxon>Methanobacteria</taxon>
        <taxon>Methanobacteriales</taxon>
        <taxon>Methanobacteriaceae</taxon>
        <taxon>Methanothermobacter</taxon>
    </lineage>
</organism>